<organism>
    <name type="scientific">Brucella canis (strain ATCC 23365 / NCTC 10854 / RM-666)</name>
    <dbReference type="NCBI Taxonomy" id="483179"/>
    <lineage>
        <taxon>Bacteria</taxon>
        <taxon>Pseudomonadati</taxon>
        <taxon>Pseudomonadota</taxon>
        <taxon>Alphaproteobacteria</taxon>
        <taxon>Hyphomicrobiales</taxon>
        <taxon>Brucellaceae</taxon>
        <taxon>Brucella/Ochrobactrum group</taxon>
        <taxon>Brucella</taxon>
    </lineage>
</organism>
<sequence>MAKEATRVRRRERKNISSGVAHVNSTFNNTMITITDAQGNAIAWSSAGAQGFKGSRKSTPFAAQIAAEDCAKKAQEHGMRSLEVEVCGPGSGRESALRALQAAGFVITSIRDVTPIPHNGCRPRKKRRV</sequence>
<feature type="chain" id="PRO_1000086178" description="Small ribosomal subunit protein uS11">
    <location>
        <begin position="1"/>
        <end position="129"/>
    </location>
</feature>
<comment type="function">
    <text evidence="1">Located on the platform of the 30S subunit, it bridges several disparate RNA helices of the 16S rRNA. Forms part of the Shine-Dalgarno cleft in the 70S ribosome.</text>
</comment>
<comment type="subunit">
    <text evidence="1">Part of the 30S ribosomal subunit. Interacts with proteins S7 and S18. Binds to IF-3.</text>
</comment>
<comment type="similarity">
    <text evidence="1">Belongs to the universal ribosomal protein uS11 family.</text>
</comment>
<dbReference type="EMBL" id="CP000872">
    <property type="protein sequence ID" value="ABX62281.1"/>
    <property type="molecule type" value="Genomic_DNA"/>
</dbReference>
<dbReference type="RefSeq" id="WP_002964339.1">
    <property type="nucleotide sequence ID" value="NC_010103.1"/>
</dbReference>
<dbReference type="SMR" id="A9M5M6"/>
<dbReference type="GeneID" id="97533547"/>
<dbReference type="KEGG" id="bcs:BCAN_A1232"/>
<dbReference type="HOGENOM" id="CLU_072439_5_0_5"/>
<dbReference type="PhylomeDB" id="A9M5M6"/>
<dbReference type="Proteomes" id="UP000001385">
    <property type="component" value="Chromosome I"/>
</dbReference>
<dbReference type="GO" id="GO:1990904">
    <property type="term" value="C:ribonucleoprotein complex"/>
    <property type="evidence" value="ECO:0007669"/>
    <property type="project" value="UniProtKB-KW"/>
</dbReference>
<dbReference type="GO" id="GO:0005840">
    <property type="term" value="C:ribosome"/>
    <property type="evidence" value="ECO:0007669"/>
    <property type="project" value="UniProtKB-KW"/>
</dbReference>
<dbReference type="GO" id="GO:0019843">
    <property type="term" value="F:rRNA binding"/>
    <property type="evidence" value="ECO:0007669"/>
    <property type="project" value="UniProtKB-UniRule"/>
</dbReference>
<dbReference type="GO" id="GO:0003735">
    <property type="term" value="F:structural constituent of ribosome"/>
    <property type="evidence" value="ECO:0007669"/>
    <property type="project" value="InterPro"/>
</dbReference>
<dbReference type="GO" id="GO:0006412">
    <property type="term" value="P:translation"/>
    <property type="evidence" value="ECO:0007669"/>
    <property type="project" value="UniProtKB-UniRule"/>
</dbReference>
<dbReference type="FunFam" id="3.30.420.80:FF:000001">
    <property type="entry name" value="30S ribosomal protein S11"/>
    <property type="match status" value="1"/>
</dbReference>
<dbReference type="Gene3D" id="3.30.420.80">
    <property type="entry name" value="Ribosomal protein S11"/>
    <property type="match status" value="1"/>
</dbReference>
<dbReference type="HAMAP" id="MF_01310">
    <property type="entry name" value="Ribosomal_uS11"/>
    <property type="match status" value="1"/>
</dbReference>
<dbReference type="InterPro" id="IPR001971">
    <property type="entry name" value="Ribosomal_uS11"/>
</dbReference>
<dbReference type="InterPro" id="IPR019981">
    <property type="entry name" value="Ribosomal_uS11_bac-type"/>
</dbReference>
<dbReference type="InterPro" id="IPR018102">
    <property type="entry name" value="Ribosomal_uS11_CS"/>
</dbReference>
<dbReference type="InterPro" id="IPR036967">
    <property type="entry name" value="Ribosomal_uS11_sf"/>
</dbReference>
<dbReference type="NCBIfam" id="NF003698">
    <property type="entry name" value="PRK05309.1"/>
    <property type="match status" value="1"/>
</dbReference>
<dbReference type="NCBIfam" id="TIGR03632">
    <property type="entry name" value="uS11_bact"/>
    <property type="match status" value="1"/>
</dbReference>
<dbReference type="PANTHER" id="PTHR11759">
    <property type="entry name" value="40S RIBOSOMAL PROTEIN S14/30S RIBOSOMAL PROTEIN S11"/>
    <property type="match status" value="1"/>
</dbReference>
<dbReference type="Pfam" id="PF00411">
    <property type="entry name" value="Ribosomal_S11"/>
    <property type="match status" value="1"/>
</dbReference>
<dbReference type="PIRSF" id="PIRSF002131">
    <property type="entry name" value="Ribosomal_S11"/>
    <property type="match status" value="1"/>
</dbReference>
<dbReference type="SUPFAM" id="SSF53137">
    <property type="entry name" value="Translational machinery components"/>
    <property type="match status" value="1"/>
</dbReference>
<dbReference type="PROSITE" id="PS00054">
    <property type="entry name" value="RIBOSOMAL_S11"/>
    <property type="match status" value="1"/>
</dbReference>
<accession>A9M5M6</accession>
<reference key="1">
    <citation type="submission" date="2007-10" db="EMBL/GenBank/DDBJ databases">
        <title>Brucella canis ATCC 23365 whole genome shotgun sequencing project.</title>
        <authorList>
            <person name="Setubal J.C."/>
            <person name="Bowns C."/>
            <person name="Boyle S."/>
            <person name="Crasta O.R."/>
            <person name="Czar M.J."/>
            <person name="Dharmanolla C."/>
            <person name="Gillespie J.J."/>
            <person name="Kenyon R.W."/>
            <person name="Lu J."/>
            <person name="Mane S."/>
            <person name="Mohapatra S."/>
            <person name="Nagrani S."/>
            <person name="Purkayastha A."/>
            <person name="Rajasimha H.K."/>
            <person name="Shallom J.M."/>
            <person name="Shallom S."/>
            <person name="Shukla M."/>
            <person name="Snyder E.E."/>
            <person name="Sobral B.W."/>
            <person name="Wattam A.R."/>
            <person name="Will R."/>
            <person name="Williams K."/>
            <person name="Yoo H."/>
            <person name="Bruce D."/>
            <person name="Detter C."/>
            <person name="Munk C."/>
            <person name="Brettin T.S."/>
        </authorList>
    </citation>
    <scope>NUCLEOTIDE SEQUENCE [LARGE SCALE GENOMIC DNA]</scope>
    <source>
        <strain>ATCC 23365 / NCTC 10854 / RM-666</strain>
    </source>
</reference>
<evidence type="ECO:0000255" key="1">
    <source>
        <dbReference type="HAMAP-Rule" id="MF_01310"/>
    </source>
</evidence>
<evidence type="ECO:0000305" key="2"/>
<protein>
    <recommendedName>
        <fullName evidence="1">Small ribosomal subunit protein uS11</fullName>
    </recommendedName>
    <alternativeName>
        <fullName evidence="2">30S ribosomal protein S11</fullName>
    </alternativeName>
</protein>
<gene>
    <name evidence="1" type="primary">rpsK</name>
    <name type="ordered locus">BCAN_A1232</name>
</gene>
<keyword id="KW-1185">Reference proteome</keyword>
<keyword id="KW-0687">Ribonucleoprotein</keyword>
<keyword id="KW-0689">Ribosomal protein</keyword>
<keyword id="KW-0694">RNA-binding</keyword>
<keyword id="KW-0699">rRNA-binding</keyword>
<name>RS11_BRUC2</name>
<proteinExistence type="inferred from homology"/>